<accession>A8MEE1</accession>
<evidence type="ECO:0000255" key="1">
    <source>
        <dbReference type="HAMAP-Rule" id="MF_00222"/>
    </source>
</evidence>
<dbReference type="EC" id="1.1.1.25" evidence="1"/>
<dbReference type="EMBL" id="CP000853">
    <property type="protein sequence ID" value="ABW17612.1"/>
    <property type="molecule type" value="Genomic_DNA"/>
</dbReference>
<dbReference type="RefSeq" id="WP_012157927.1">
    <property type="nucleotide sequence ID" value="NC_009922.1"/>
</dbReference>
<dbReference type="SMR" id="A8MEE1"/>
<dbReference type="STRING" id="350688.Clos_0042"/>
<dbReference type="KEGG" id="aoe:Clos_0042"/>
<dbReference type="eggNOG" id="COG0169">
    <property type="taxonomic scope" value="Bacteria"/>
</dbReference>
<dbReference type="HOGENOM" id="CLU_044063_4_1_9"/>
<dbReference type="OrthoDB" id="9792692at2"/>
<dbReference type="UniPathway" id="UPA00053">
    <property type="reaction ID" value="UER00087"/>
</dbReference>
<dbReference type="Proteomes" id="UP000000269">
    <property type="component" value="Chromosome"/>
</dbReference>
<dbReference type="GO" id="GO:0050661">
    <property type="term" value="F:NADP binding"/>
    <property type="evidence" value="ECO:0007669"/>
    <property type="project" value="InterPro"/>
</dbReference>
<dbReference type="GO" id="GO:0004764">
    <property type="term" value="F:shikimate 3-dehydrogenase (NADP+) activity"/>
    <property type="evidence" value="ECO:0007669"/>
    <property type="project" value="UniProtKB-UniRule"/>
</dbReference>
<dbReference type="GO" id="GO:0008652">
    <property type="term" value="P:amino acid biosynthetic process"/>
    <property type="evidence" value="ECO:0007669"/>
    <property type="project" value="UniProtKB-KW"/>
</dbReference>
<dbReference type="GO" id="GO:0009073">
    <property type="term" value="P:aromatic amino acid family biosynthetic process"/>
    <property type="evidence" value="ECO:0007669"/>
    <property type="project" value="UniProtKB-KW"/>
</dbReference>
<dbReference type="GO" id="GO:0009423">
    <property type="term" value="P:chorismate biosynthetic process"/>
    <property type="evidence" value="ECO:0007669"/>
    <property type="project" value="UniProtKB-UniRule"/>
</dbReference>
<dbReference type="GO" id="GO:0019632">
    <property type="term" value="P:shikimate metabolic process"/>
    <property type="evidence" value="ECO:0007669"/>
    <property type="project" value="InterPro"/>
</dbReference>
<dbReference type="CDD" id="cd01065">
    <property type="entry name" value="NAD_bind_Shikimate_DH"/>
    <property type="match status" value="1"/>
</dbReference>
<dbReference type="FunFam" id="3.40.50.10860:FF:000004">
    <property type="entry name" value="Quinate/shikimate dehydrogenase"/>
    <property type="match status" value="1"/>
</dbReference>
<dbReference type="FunFam" id="3.40.50.720:FF:000086">
    <property type="entry name" value="Quinate/shikimate dehydrogenase"/>
    <property type="match status" value="1"/>
</dbReference>
<dbReference type="Gene3D" id="3.40.50.10860">
    <property type="entry name" value="Leucine Dehydrogenase, chain A, domain 1"/>
    <property type="match status" value="1"/>
</dbReference>
<dbReference type="Gene3D" id="3.40.50.720">
    <property type="entry name" value="NAD(P)-binding Rossmann-like Domain"/>
    <property type="match status" value="1"/>
</dbReference>
<dbReference type="HAMAP" id="MF_00222">
    <property type="entry name" value="Shikimate_DH_AroE"/>
    <property type="match status" value="1"/>
</dbReference>
<dbReference type="InterPro" id="IPR046346">
    <property type="entry name" value="Aminoacid_DH-like_N_sf"/>
</dbReference>
<dbReference type="InterPro" id="IPR036291">
    <property type="entry name" value="NAD(P)-bd_dom_sf"/>
</dbReference>
<dbReference type="InterPro" id="IPR041121">
    <property type="entry name" value="SDH_C"/>
</dbReference>
<dbReference type="InterPro" id="IPR011342">
    <property type="entry name" value="Shikimate_DH"/>
</dbReference>
<dbReference type="InterPro" id="IPR013708">
    <property type="entry name" value="Shikimate_DH-bd_N"/>
</dbReference>
<dbReference type="InterPro" id="IPR022893">
    <property type="entry name" value="Shikimate_DH_fam"/>
</dbReference>
<dbReference type="InterPro" id="IPR006151">
    <property type="entry name" value="Shikm_DH/Glu-tRNA_Rdtase"/>
</dbReference>
<dbReference type="NCBIfam" id="TIGR00507">
    <property type="entry name" value="aroE"/>
    <property type="match status" value="1"/>
</dbReference>
<dbReference type="NCBIfam" id="NF001314">
    <property type="entry name" value="PRK00258.2-2"/>
    <property type="match status" value="1"/>
</dbReference>
<dbReference type="NCBIfam" id="NF001319">
    <property type="entry name" value="PRK00258.3-3"/>
    <property type="match status" value="1"/>
</dbReference>
<dbReference type="PANTHER" id="PTHR21089:SF1">
    <property type="entry name" value="BIFUNCTIONAL 3-DEHYDROQUINATE DEHYDRATASE_SHIKIMATE DEHYDROGENASE, CHLOROPLASTIC"/>
    <property type="match status" value="1"/>
</dbReference>
<dbReference type="PANTHER" id="PTHR21089">
    <property type="entry name" value="SHIKIMATE DEHYDROGENASE"/>
    <property type="match status" value="1"/>
</dbReference>
<dbReference type="Pfam" id="PF18317">
    <property type="entry name" value="SDH_C"/>
    <property type="match status" value="1"/>
</dbReference>
<dbReference type="Pfam" id="PF01488">
    <property type="entry name" value="Shikimate_DH"/>
    <property type="match status" value="1"/>
</dbReference>
<dbReference type="Pfam" id="PF08501">
    <property type="entry name" value="Shikimate_dh_N"/>
    <property type="match status" value="1"/>
</dbReference>
<dbReference type="SUPFAM" id="SSF53223">
    <property type="entry name" value="Aminoacid dehydrogenase-like, N-terminal domain"/>
    <property type="match status" value="1"/>
</dbReference>
<dbReference type="SUPFAM" id="SSF51735">
    <property type="entry name" value="NAD(P)-binding Rossmann-fold domains"/>
    <property type="match status" value="1"/>
</dbReference>
<proteinExistence type="inferred from homology"/>
<reference key="1">
    <citation type="submission" date="2007-10" db="EMBL/GenBank/DDBJ databases">
        <title>Complete genome of Alkaliphilus oremlandii OhILAs.</title>
        <authorList>
            <person name="Copeland A."/>
            <person name="Lucas S."/>
            <person name="Lapidus A."/>
            <person name="Barry K."/>
            <person name="Detter J.C."/>
            <person name="Glavina del Rio T."/>
            <person name="Hammon N."/>
            <person name="Israni S."/>
            <person name="Dalin E."/>
            <person name="Tice H."/>
            <person name="Pitluck S."/>
            <person name="Chain P."/>
            <person name="Malfatti S."/>
            <person name="Shin M."/>
            <person name="Vergez L."/>
            <person name="Schmutz J."/>
            <person name="Larimer F."/>
            <person name="Land M."/>
            <person name="Hauser L."/>
            <person name="Kyrpides N."/>
            <person name="Mikhailova N."/>
            <person name="Stolz J.F."/>
            <person name="Dawson A."/>
            <person name="Fisher E."/>
            <person name="Crable B."/>
            <person name="Perera E."/>
            <person name="Lisak J."/>
            <person name="Ranganathan M."/>
            <person name="Basu P."/>
            <person name="Richardson P."/>
        </authorList>
    </citation>
    <scope>NUCLEOTIDE SEQUENCE [LARGE SCALE GENOMIC DNA]</scope>
    <source>
        <strain>OhILAs</strain>
    </source>
</reference>
<gene>
    <name evidence="1" type="primary">aroE</name>
    <name type="ordered locus">Clos_0042</name>
</gene>
<name>AROE_ALKOO</name>
<feature type="chain" id="PRO_1000058659" description="Shikimate dehydrogenase (NADP(+))">
    <location>
        <begin position="1"/>
        <end position="286"/>
    </location>
</feature>
<feature type="active site" description="Proton acceptor" evidence="1">
    <location>
        <position position="73"/>
    </location>
</feature>
<feature type="binding site" evidence="1">
    <location>
        <begin position="22"/>
        <end position="24"/>
    </location>
    <ligand>
        <name>shikimate</name>
        <dbReference type="ChEBI" id="CHEBI:36208"/>
    </ligand>
</feature>
<feature type="binding site" evidence="1">
    <location>
        <position position="69"/>
    </location>
    <ligand>
        <name>shikimate</name>
        <dbReference type="ChEBI" id="CHEBI:36208"/>
    </ligand>
</feature>
<feature type="binding site" evidence="1">
    <location>
        <position position="85"/>
    </location>
    <ligand>
        <name>NADP(+)</name>
        <dbReference type="ChEBI" id="CHEBI:58349"/>
    </ligand>
</feature>
<feature type="binding site" evidence="1">
    <location>
        <position position="94"/>
    </location>
    <ligand>
        <name>shikimate</name>
        <dbReference type="ChEBI" id="CHEBI:36208"/>
    </ligand>
</feature>
<feature type="binding site" evidence="1">
    <location>
        <position position="109"/>
    </location>
    <ligand>
        <name>shikimate</name>
        <dbReference type="ChEBI" id="CHEBI:36208"/>
    </ligand>
</feature>
<feature type="binding site" evidence="1">
    <location>
        <begin position="133"/>
        <end position="137"/>
    </location>
    <ligand>
        <name>NADP(+)</name>
        <dbReference type="ChEBI" id="CHEBI:58349"/>
    </ligand>
</feature>
<feature type="binding site" evidence="1">
    <location>
        <begin position="157"/>
        <end position="162"/>
    </location>
    <ligand>
        <name>NADP(+)</name>
        <dbReference type="ChEBI" id="CHEBI:58349"/>
    </ligand>
</feature>
<feature type="binding site" evidence="1">
    <location>
        <position position="231"/>
    </location>
    <ligand>
        <name>NADP(+)</name>
        <dbReference type="ChEBI" id="CHEBI:58349"/>
    </ligand>
</feature>
<feature type="binding site" evidence="1">
    <location>
        <position position="233"/>
    </location>
    <ligand>
        <name>shikimate</name>
        <dbReference type="ChEBI" id="CHEBI:36208"/>
    </ligand>
</feature>
<feature type="binding site" evidence="1">
    <location>
        <position position="254"/>
    </location>
    <ligand>
        <name>NADP(+)</name>
        <dbReference type="ChEBI" id="CHEBI:58349"/>
    </ligand>
</feature>
<organism>
    <name type="scientific">Alkaliphilus oremlandii (strain OhILAs)</name>
    <name type="common">Clostridium oremlandii (strain OhILAs)</name>
    <dbReference type="NCBI Taxonomy" id="350688"/>
    <lineage>
        <taxon>Bacteria</taxon>
        <taxon>Bacillati</taxon>
        <taxon>Bacillota</taxon>
        <taxon>Clostridia</taxon>
        <taxon>Peptostreptococcales</taxon>
        <taxon>Natronincolaceae</taxon>
        <taxon>Alkaliphilus</taxon>
    </lineage>
</organism>
<keyword id="KW-0028">Amino-acid biosynthesis</keyword>
<keyword id="KW-0057">Aromatic amino acid biosynthesis</keyword>
<keyword id="KW-0521">NADP</keyword>
<keyword id="KW-0560">Oxidoreductase</keyword>
<keyword id="KW-1185">Reference proteome</keyword>
<protein>
    <recommendedName>
        <fullName evidence="1">Shikimate dehydrogenase (NADP(+))</fullName>
        <shortName evidence="1">SDH</shortName>
        <ecNumber evidence="1">1.1.1.25</ecNumber>
    </recommendedName>
</protein>
<sequence>MSYVITDETKLTGIIGRPIKQSFSPKIHNGAFQYLNLNYIYIPFEVVQQDLSKTVEAMKVLKFRGFNVTMPHKREVMNYLDEVSENAKIIGAVNTVVNQNGKLVGHNTDGKGYVQSLEDEGIYVKEKTFVIAGAGGAARSVAVQLALDGAKKITILNRTIDKAHDIAQLIGMSIPNVHIEINCLENKTLAKAVEEADVLINTTSLGMYSMEEESIIGEEKVLPSNLVVSDLIYNPAKTKLLQQAESRGCKTINGLGMLIGQAAIAFELWTEVAMPIDYIKKTLFTR</sequence>
<comment type="function">
    <text evidence="1">Involved in the biosynthesis of the chorismate, which leads to the biosynthesis of aromatic amino acids. Catalyzes the reversible NADPH linked reduction of 3-dehydroshikimate (DHSA) to yield shikimate (SA).</text>
</comment>
<comment type="catalytic activity">
    <reaction evidence="1">
        <text>shikimate + NADP(+) = 3-dehydroshikimate + NADPH + H(+)</text>
        <dbReference type="Rhea" id="RHEA:17737"/>
        <dbReference type="ChEBI" id="CHEBI:15378"/>
        <dbReference type="ChEBI" id="CHEBI:16630"/>
        <dbReference type="ChEBI" id="CHEBI:36208"/>
        <dbReference type="ChEBI" id="CHEBI:57783"/>
        <dbReference type="ChEBI" id="CHEBI:58349"/>
        <dbReference type="EC" id="1.1.1.25"/>
    </reaction>
</comment>
<comment type="pathway">
    <text evidence="1">Metabolic intermediate biosynthesis; chorismate biosynthesis; chorismate from D-erythrose 4-phosphate and phosphoenolpyruvate: step 4/7.</text>
</comment>
<comment type="subunit">
    <text evidence="1">Homodimer.</text>
</comment>
<comment type="similarity">
    <text evidence="1">Belongs to the shikimate dehydrogenase family.</text>
</comment>